<reference key="1">
    <citation type="journal article" date="1991" name="J. Gen. Virol.">
        <title>Nucleotide sequence of 42 kbp of vaccinia virus strain WR from near the right inverted terminal repeat.</title>
        <authorList>
            <person name="Smith G.L."/>
            <person name="Chan Y.S."/>
            <person name="Howard S.T."/>
        </authorList>
    </citation>
    <scope>NUCLEOTIDE SEQUENCE [GENOMIC DNA]</scope>
</reference>
<dbReference type="EMBL" id="AY243312">
    <property type="status" value="NOT_ANNOTATED_CDS"/>
    <property type="molecule type" value="Genomic_DNA"/>
</dbReference>
<dbReference type="PIR" id="E42529">
    <property type="entry name" value="E42529"/>
</dbReference>
<dbReference type="Proteomes" id="UP000000344">
    <property type="component" value="Genome"/>
</dbReference>
<name>YVBD_VACCW</name>
<organism>
    <name type="scientific">Vaccinia virus (strain Western Reserve)</name>
    <name type="common">VACV</name>
    <name type="synonym">Vaccinia virus (strain WR)</name>
    <dbReference type="NCBI Taxonomy" id="10254"/>
    <lineage>
        <taxon>Viruses</taxon>
        <taxon>Varidnaviria</taxon>
        <taxon>Bamfordvirae</taxon>
        <taxon>Nucleocytoviricota</taxon>
        <taxon>Pokkesviricetes</taxon>
        <taxon>Chitovirales</taxon>
        <taxon>Poxviridae</taxon>
        <taxon>Chordopoxvirinae</taxon>
        <taxon>Orthopoxvirus</taxon>
        <taxon>Vaccinia virus</taxon>
    </lineage>
</organism>
<sequence>MNSIPVPTLTETSRSFIIIPLSVSITHCLTRDSFGIVRTISSNGITAHLVNSLYILCNMALLLPYTINLLL</sequence>
<accession>P68474</accession>
<accession>P20544</accession>
<feature type="chain" id="PRO_0000099672" description="Uncharacterized 7.8 kDa protein">
    <location>
        <begin position="1"/>
        <end position="71"/>
    </location>
</feature>
<proteinExistence type="predicted"/>
<gene>
    <name type="ORF">B ORF D</name>
</gene>
<organismHost>
    <name type="scientific">Bos taurus</name>
    <name type="common">Bovine</name>
    <dbReference type="NCBI Taxonomy" id="9913"/>
</organismHost>
<keyword id="KW-1185">Reference proteome</keyword>
<protein>
    <recommendedName>
        <fullName>Uncharacterized 7.8 kDa protein</fullName>
    </recommendedName>
</protein>